<keyword id="KW-0067">ATP-binding</keyword>
<keyword id="KW-0418">Kinase</keyword>
<keyword id="KW-0460">Magnesium</keyword>
<keyword id="KW-0479">Metal-binding</keyword>
<keyword id="KW-0547">Nucleotide-binding</keyword>
<keyword id="KW-0784">Thiamine biosynthesis</keyword>
<keyword id="KW-0808">Transferase</keyword>
<evidence type="ECO:0000255" key="1">
    <source>
        <dbReference type="HAMAP-Rule" id="MF_00228"/>
    </source>
</evidence>
<proteinExistence type="inferred from homology"/>
<gene>
    <name evidence="1" type="primary">thiM</name>
    <name type="ordered locus">CF0803</name>
</gene>
<reference key="1">
    <citation type="journal article" date="2006" name="DNA Res.">
        <title>Genome sequence of the cat pathogen, Chlamydophila felis.</title>
        <authorList>
            <person name="Azuma Y."/>
            <person name="Hirakawa H."/>
            <person name="Yamashita A."/>
            <person name="Cai Y."/>
            <person name="Rahman M.A."/>
            <person name="Suzuki H."/>
            <person name="Mitaku S."/>
            <person name="Toh H."/>
            <person name="Goto S."/>
            <person name="Murakami T."/>
            <person name="Sugi K."/>
            <person name="Hayashi H."/>
            <person name="Fukushi H."/>
            <person name="Hattori M."/>
            <person name="Kuhara S."/>
            <person name="Shirai M."/>
        </authorList>
    </citation>
    <scope>NUCLEOTIDE SEQUENCE [LARGE SCALE GENOMIC DNA]</scope>
    <source>
        <strain>Fe/C-56</strain>
    </source>
</reference>
<comment type="function">
    <text evidence="1">Catalyzes the phosphorylation of the hydroxyl group of 4-methyl-5-beta-hydroxyethylthiazole (THZ).</text>
</comment>
<comment type="catalytic activity">
    <reaction evidence="1">
        <text>5-(2-hydroxyethyl)-4-methylthiazole + ATP = 4-methyl-5-(2-phosphooxyethyl)-thiazole + ADP + H(+)</text>
        <dbReference type="Rhea" id="RHEA:24212"/>
        <dbReference type="ChEBI" id="CHEBI:15378"/>
        <dbReference type="ChEBI" id="CHEBI:17957"/>
        <dbReference type="ChEBI" id="CHEBI:30616"/>
        <dbReference type="ChEBI" id="CHEBI:58296"/>
        <dbReference type="ChEBI" id="CHEBI:456216"/>
        <dbReference type="EC" id="2.7.1.50"/>
    </reaction>
</comment>
<comment type="cofactor">
    <cofactor evidence="1">
        <name>Mg(2+)</name>
        <dbReference type="ChEBI" id="CHEBI:18420"/>
    </cofactor>
</comment>
<comment type="pathway">
    <text evidence="1">Cofactor biosynthesis; thiamine diphosphate biosynthesis; 4-methyl-5-(2-phosphoethyl)-thiazole from 5-(2-hydroxyethyl)-4-methylthiazole: step 1/1.</text>
</comment>
<comment type="similarity">
    <text evidence="1">Belongs to the Thz kinase family.</text>
</comment>
<organism>
    <name type="scientific">Chlamydia felis (strain Fe/C-56)</name>
    <name type="common">Chlamydophila felis</name>
    <dbReference type="NCBI Taxonomy" id="264202"/>
    <lineage>
        <taxon>Bacteria</taxon>
        <taxon>Pseudomonadati</taxon>
        <taxon>Chlamydiota</taxon>
        <taxon>Chlamydiia</taxon>
        <taxon>Chlamydiales</taxon>
        <taxon>Chlamydiaceae</taxon>
        <taxon>Chlamydia/Chlamydophila group</taxon>
        <taxon>Chlamydia</taxon>
    </lineage>
</organism>
<dbReference type="EC" id="2.7.1.50" evidence="1"/>
<dbReference type="EMBL" id="AP006861">
    <property type="protein sequence ID" value="BAE81575.1"/>
    <property type="molecule type" value="Genomic_DNA"/>
</dbReference>
<dbReference type="RefSeq" id="WP_011458352.1">
    <property type="nucleotide sequence ID" value="NC_007899.1"/>
</dbReference>
<dbReference type="SMR" id="Q253G3"/>
<dbReference type="STRING" id="264202.CF0803"/>
<dbReference type="KEGG" id="cfe:CF0803"/>
<dbReference type="eggNOG" id="COG2145">
    <property type="taxonomic scope" value="Bacteria"/>
</dbReference>
<dbReference type="HOGENOM" id="CLU_019943_0_1_0"/>
<dbReference type="OrthoDB" id="9778146at2"/>
<dbReference type="UniPathway" id="UPA00060">
    <property type="reaction ID" value="UER00139"/>
</dbReference>
<dbReference type="Proteomes" id="UP000001260">
    <property type="component" value="Chromosome"/>
</dbReference>
<dbReference type="GO" id="GO:0005524">
    <property type="term" value="F:ATP binding"/>
    <property type="evidence" value="ECO:0007669"/>
    <property type="project" value="UniProtKB-UniRule"/>
</dbReference>
<dbReference type="GO" id="GO:0004417">
    <property type="term" value="F:hydroxyethylthiazole kinase activity"/>
    <property type="evidence" value="ECO:0007669"/>
    <property type="project" value="UniProtKB-UniRule"/>
</dbReference>
<dbReference type="GO" id="GO:0000287">
    <property type="term" value="F:magnesium ion binding"/>
    <property type="evidence" value="ECO:0007669"/>
    <property type="project" value="UniProtKB-UniRule"/>
</dbReference>
<dbReference type="GO" id="GO:0009228">
    <property type="term" value="P:thiamine biosynthetic process"/>
    <property type="evidence" value="ECO:0007669"/>
    <property type="project" value="UniProtKB-KW"/>
</dbReference>
<dbReference type="GO" id="GO:0009229">
    <property type="term" value="P:thiamine diphosphate biosynthetic process"/>
    <property type="evidence" value="ECO:0007669"/>
    <property type="project" value="UniProtKB-UniRule"/>
</dbReference>
<dbReference type="CDD" id="cd01170">
    <property type="entry name" value="THZ_kinase"/>
    <property type="match status" value="1"/>
</dbReference>
<dbReference type="Gene3D" id="3.40.1190.20">
    <property type="match status" value="1"/>
</dbReference>
<dbReference type="HAMAP" id="MF_00228">
    <property type="entry name" value="Thz_kinase"/>
    <property type="match status" value="1"/>
</dbReference>
<dbReference type="InterPro" id="IPR000417">
    <property type="entry name" value="Hyethyz_kinase"/>
</dbReference>
<dbReference type="InterPro" id="IPR029056">
    <property type="entry name" value="Ribokinase-like"/>
</dbReference>
<dbReference type="NCBIfam" id="NF006830">
    <property type="entry name" value="PRK09355.1"/>
    <property type="match status" value="1"/>
</dbReference>
<dbReference type="Pfam" id="PF02110">
    <property type="entry name" value="HK"/>
    <property type="match status" value="1"/>
</dbReference>
<dbReference type="PIRSF" id="PIRSF000513">
    <property type="entry name" value="Thz_kinase"/>
    <property type="match status" value="1"/>
</dbReference>
<dbReference type="PRINTS" id="PR01099">
    <property type="entry name" value="HYETHTZKNASE"/>
</dbReference>
<dbReference type="SUPFAM" id="SSF53613">
    <property type="entry name" value="Ribokinase-like"/>
    <property type="match status" value="1"/>
</dbReference>
<accession>Q253G3</accession>
<protein>
    <recommendedName>
        <fullName evidence="1">Hydroxyethylthiazole kinase</fullName>
        <ecNumber evidence="1">2.7.1.50</ecNumber>
    </recommendedName>
    <alternativeName>
        <fullName evidence="1">4-methyl-5-beta-hydroxyethylthiazole kinase</fullName>
        <shortName evidence="1">TH kinase</shortName>
        <shortName evidence="1">Thz kinase</shortName>
    </alternativeName>
</protein>
<name>THIM_CHLFF</name>
<sequence length="262" mass="28614">MLEQMHEALQRLRQEQPVVLNITNYVSMDFLANCFLALGASPVMSVSDLELEELIGLSSAVYINIGTLDHLFIQRAYRAVDLAVRQSKPVIFDPAGSGATKIRTEVSHHILSHATIIRGNASEILSFGDVPAKTRGMDSANATHDAKDIAVALASECLCGCAVAVTGSEDFITDGKRHATVELGDPLMSRITGMGCSLTGVLAAFRSVIEDSFEATRLGVEYFSLCGMLARERCEGPGLFKAYFLDELYAADFDRMRRYHNQ</sequence>
<feature type="chain" id="PRO_1000021503" description="Hydroxyethylthiazole kinase">
    <location>
        <begin position="1"/>
        <end position="262"/>
    </location>
</feature>
<feature type="binding site" evidence="1">
    <location>
        <position position="44"/>
    </location>
    <ligand>
        <name>substrate</name>
    </ligand>
</feature>
<feature type="binding site" evidence="1">
    <location>
        <position position="118"/>
    </location>
    <ligand>
        <name>ATP</name>
        <dbReference type="ChEBI" id="CHEBI:30616"/>
    </ligand>
</feature>
<feature type="binding site" evidence="1">
    <location>
        <position position="166"/>
    </location>
    <ligand>
        <name>ATP</name>
        <dbReference type="ChEBI" id="CHEBI:30616"/>
    </ligand>
</feature>
<feature type="binding site" evidence="1">
    <location>
        <position position="193"/>
    </location>
    <ligand>
        <name>substrate</name>
    </ligand>
</feature>